<accession>Q9LX54</accession>
<reference key="1">
    <citation type="journal article" date="2000" name="Nature">
        <title>Sequence and analysis of chromosome 3 of the plant Arabidopsis thaliana.</title>
        <authorList>
            <person name="Salanoubat M."/>
            <person name="Lemcke K."/>
            <person name="Rieger M."/>
            <person name="Ansorge W."/>
            <person name="Unseld M."/>
            <person name="Fartmann B."/>
            <person name="Valle G."/>
            <person name="Bloecker H."/>
            <person name="Perez-Alonso M."/>
            <person name="Obermaier B."/>
            <person name="Delseny M."/>
            <person name="Boutry M."/>
            <person name="Grivell L.A."/>
            <person name="Mache R."/>
            <person name="Puigdomenech P."/>
            <person name="De Simone V."/>
            <person name="Choisne N."/>
            <person name="Artiguenave F."/>
            <person name="Robert C."/>
            <person name="Brottier P."/>
            <person name="Wincker P."/>
            <person name="Cattolico L."/>
            <person name="Weissenbach J."/>
            <person name="Saurin W."/>
            <person name="Quetier F."/>
            <person name="Schaefer M."/>
            <person name="Mueller-Auer S."/>
            <person name="Gabel C."/>
            <person name="Fuchs M."/>
            <person name="Benes V."/>
            <person name="Wurmbach E."/>
            <person name="Drzonek H."/>
            <person name="Erfle H."/>
            <person name="Jordan N."/>
            <person name="Bangert S."/>
            <person name="Wiedelmann R."/>
            <person name="Kranz H."/>
            <person name="Voss H."/>
            <person name="Holland R."/>
            <person name="Brandt P."/>
            <person name="Nyakatura G."/>
            <person name="Vezzi A."/>
            <person name="D'Angelo M."/>
            <person name="Pallavicini A."/>
            <person name="Toppo S."/>
            <person name="Simionati B."/>
            <person name="Conrad A."/>
            <person name="Hornischer K."/>
            <person name="Kauer G."/>
            <person name="Loehnert T.-H."/>
            <person name="Nordsiek G."/>
            <person name="Reichelt J."/>
            <person name="Scharfe M."/>
            <person name="Schoen O."/>
            <person name="Bargues M."/>
            <person name="Terol J."/>
            <person name="Climent J."/>
            <person name="Navarro P."/>
            <person name="Collado C."/>
            <person name="Perez-Perez A."/>
            <person name="Ottenwaelder B."/>
            <person name="Duchemin D."/>
            <person name="Cooke R."/>
            <person name="Laudie M."/>
            <person name="Berger-Llauro C."/>
            <person name="Purnelle B."/>
            <person name="Masuy D."/>
            <person name="de Haan M."/>
            <person name="Maarse A.C."/>
            <person name="Alcaraz J.-P."/>
            <person name="Cottet A."/>
            <person name="Casacuberta E."/>
            <person name="Monfort A."/>
            <person name="Argiriou A."/>
            <person name="Flores M."/>
            <person name="Liguori R."/>
            <person name="Vitale D."/>
            <person name="Mannhaupt G."/>
            <person name="Haase D."/>
            <person name="Schoof H."/>
            <person name="Rudd S."/>
            <person name="Zaccaria P."/>
            <person name="Mewes H.-W."/>
            <person name="Mayer K.F.X."/>
            <person name="Kaul S."/>
            <person name="Town C.D."/>
            <person name="Koo H.L."/>
            <person name="Tallon L.J."/>
            <person name="Jenkins J."/>
            <person name="Rooney T."/>
            <person name="Rizzo M."/>
            <person name="Walts A."/>
            <person name="Utterback T."/>
            <person name="Fujii C.Y."/>
            <person name="Shea T.P."/>
            <person name="Creasy T.H."/>
            <person name="Haas B."/>
            <person name="Maiti R."/>
            <person name="Wu D."/>
            <person name="Peterson J."/>
            <person name="Van Aken S."/>
            <person name="Pai G."/>
            <person name="Militscher J."/>
            <person name="Sellers P."/>
            <person name="Gill J.E."/>
            <person name="Feldblyum T.V."/>
            <person name="Preuss D."/>
            <person name="Lin X."/>
            <person name="Nierman W.C."/>
            <person name="Salzberg S.L."/>
            <person name="White O."/>
            <person name="Venter J.C."/>
            <person name="Fraser C.M."/>
            <person name="Kaneko T."/>
            <person name="Nakamura Y."/>
            <person name="Sato S."/>
            <person name="Kato T."/>
            <person name="Asamizu E."/>
            <person name="Sasamoto S."/>
            <person name="Kimura T."/>
            <person name="Idesawa K."/>
            <person name="Kawashima K."/>
            <person name="Kishida Y."/>
            <person name="Kiyokawa C."/>
            <person name="Kohara M."/>
            <person name="Matsumoto M."/>
            <person name="Matsuno A."/>
            <person name="Muraki A."/>
            <person name="Nakayama S."/>
            <person name="Nakazaki N."/>
            <person name="Shinpo S."/>
            <person name="Takeuchi C."/>
            <person name="Wada T."/>
            <person name="Watanabe A."/>
            <person name="Yamada M."/>
            <person name="Yasuda M."/>
            <person name="Tabata S."/>
        </authorList>
    </citation>
    <scope>NUCLEOTIDE SEQUENCE [LARGE SCALE GENOMIC DNA]</scope>
    <source>
        <strain>cv. Columbia</strain>
    </source>
</reference>
<reference key="2">
    <citation type="journal article" date="2017" name="Plant J.">
        <title>Araport11: a complete reannotation of the Arabidopsis thaliana reference genome.</title>
        <authorList>
            <person name="Cheng C.Y."/>
            <person name="Krishnakumar V."/>
            <person name="Chan A.P."/>
            <person name="Thibaud-Nissen F."/>
            <person name="Schobel S."/>
            <person name="Town C.D."/>
        </authorList>
    </citation>
    <scope>GENOME REANNOTATION</scope>
    <source>
        <strain>cv. Columbia</strain>
    </source>
</reference>
<gene>
    <name type="ordered locus">At3g59170</name>
    <name type="ORF">F25L23.30</name>
</gene>
<keyword id="KW-0433">Leucine-rich repeat</keyword>
<keyword id="KW-1185">Reference proteome</keyword>
<keyword id="KW-0677">Repeat</keyword>
<dbReference type="EMBL" id="AL356014">
    <property type="protein sequence ID" value="CAB91587.1"/>
    <property type="molecule type" value="Genomic_DNA"/>
</dbReference>
<dbReference type="EMBL" id="CP002686">
    <property type="protein sequence ID" value="AEE79885.1"/>
    <property type="molecule type" value="Genomic_DNA"/>
</dbReference>
<dbReference type="PIR" id="T48985">
    <property type="entry name" value="T48985"/>
</dbReference>
<dbReference type="RefSeq" id="NP_191476.1">
    <property type="nucleotide sequence ID" value="NM_115779.1"/>
</dbReference>
<dbReference type="BioGRID" id="10401">
    <property type="interactions" value="1"/>
</dbReference>
<dbReference type="FunCoup" id="Q9LX54">
    <property type="interactions" value="34"/>
</dbReference>
<dbReference type="iPTMnet" id="Q9LX54"/>
<dbReference type="PaxDb" id="3702-AT3G59170.1"/>
<dbReference type="EnsemblPlants" id="AT3G59170.1">
    <property type="protein sequence ID" value="AT3G59170.1"/>
    <property type="gene ID" value="AT3G59170"/>
</dbReference>
<dbReference type="GeneID" id="825086"/>
<dbReference type="Gramene" id="AT3G59170.1">
    <property type="protein sequence ID" value="AT3G59170.1"/>
    <property type="gene ID" value="AT3G59170"/>
</dbReference>
<dbReference type="KEGG" id="ath:AT3G59170"/>
<dbReference type="Araport" id="AT3G59170"/>
<dbReference type="TAIR" id="AT3G59170"/>
<dbReference type="HOGENOM" id="CLU_010721_7_4_1"/>
<dbReference type="InParanoid" id="Q9LX54"/>
<dbReference type="OMA" id="YCEAIPI"/>
<dbReference type="PhylomeDB" id="Q9LX54"/>
<dbReference type="PRO" id="PR:Q9LX54"/>
<dbReference type="Proteomes" id="UP000006548">
    <property type="component" value="Chromosome 3"/>
</dbReference>
<dbReference type="ExpressionAtlas" id="Q9LX54">
    <property type="expression patterns" value="baseline and differential"/>
</dbReference>
<dbReference type="CDD" id="cd22160">
    <property type="entry name" value="F-box_AtFBL13-like"/>
    <property type="match status" value="1"/>
</dbReference>
<dbReference type="Gene3D" id="1.20.1280.50">
    <property type="match status" value="1"/>
</dbReference>
<dbReference type="Gene3D" id="3.80.10.10">
    <property type="entry name" value="Ribonuclease Inhibitor"/>
    <property type="match status" value="1"/>
</dbReference>
<dbReference type="InterPro" id="IPR036047">
    <property type="entry name" value="F-box-like_dom_sf"/>
</dbReference>
<dbReference type="InterPro" id="IPR053781">
    <property type="entry name" value="F-box_AtFBL13-like"/>
</dbReference>
<dbReference type="InterPro" id="IPR001810">
    <property type="entry name" value="F-box_dom"/>
</dbReference>
<dbReference type="InterPro" id="IPR006566">
    <property type="entry name" value="FBD"/>
</dbReference>
<dbReference type="InterPro" id="IPR055294">
    <property type="entry name" value="FBL60-like"/>
</dbReference>
<dbReference type="InterPro" id="IPR032675">
    <property type="entry name" value="LRR_dom_sf"/>
</dbReference>
<dbReference type="InterPro" id="IPR055411">
    <property type="entry name" value="LRR_FXL15/At3g58940/PEG3-like"/>
</dbReference>
<dbReference type="PANTHER" id="PTHR31293">
    <property type="entry name" value="RNI-LIKE SUPERFAMILY PROTEIN"/>
    <property type="match status" value="1"/>
</dbReference>
<dbReference type="PANTHER" id="PTHR31293:SF16">
    <property type="entry name" value="RNI-LIKE SUPERFAMILY PROTEIN"/>
    <property type="match status" value="1"/>
</dbReference>
<dbReference type="Pfam" id="PF00646">
    <property type="entry name" value="F-box"/>
    <property type="match status" value="1"/>
</dbReference>
<dbReference type="Pfam" id="PF24758">
    <property type="entry name" value="LRR_At5g56370"/>
    <property type="match status" value="1"/>
</dbReference>
<dbReference type="SMART" id="SM00579">
    <property type="entry name" value="FBD"/>
    <property type="match status" value="1"/>
</dbReference>
<dbReference type="SMART" id="SM00256">
    <property type="entry name" value="FBOX"/>
    <property type="match status" value="1"/>
</dbReference>
<dbReference type="SUPFAM" id="SSF81383">
    <property type="entry name" value="F-box domain"/>
    <property type="match status" value="1"/>
</dbReference>
<dbReference type="SUPFAM" id="SSF52058">
    <property type="entry name" value="L domain-like"/>
    <property type="match status" value="1"/>
</dbReference>
<dbReference type="PROSITE" id="PS50181">
    <property type="entry name" value="FBOX"/>
    <property type="match status" value="1"/>
</dbReference>
<sequence>MDSVSKDMINVLPDALLCHILSFLTTKEAASTSLLSRRWRYLLAFVPNLEFDDSVYLHRDKRVKNTLHEKGFVGFVLLVNNKRKKLSTSFPDFVDRILALQGNSPLDKFSLKMVDGHDPVDPDSVVPWIHKVLVRGVSDLHLVVDMNEWTSDPLPSRIFLSETLVKLTIKIRDGPFIDVKHVHLPKLKTLYLQSVMFDENDIGFRKLLSGCPVLEELVLDGMGSCVWTSFTVSVATLKRLTFCCQKMSSFGYMHDDENPNNVSFDTPNLVYLEYAQVIANNYPKVNFDLLVEAKIDIWMTVDQIREVRLRKNEVNCMVGNATDFIVGLRNVRVLYLSPETLEVLTYCCKQIPIFENLSHLTIKSDPNVGWKPLTKLLKNSPKLETLVFQGLLHRDNKEDVAISSSSVKVLKIFLSGDKLKKQIEKVKHFLKTMPRLEQLVFYYDVKVLSQLHMLSRLASPKCKIHLIPSRESV</sequence>
<name>FBL62_ARATH</name>
<evidence type="ECO:0000255" key="1">
    <source>
        <dbReference type="PROSITE-ProRule" id="PRU00080"/>
    </source>
</evidence>
<organism>
    <name type="scientific">Arabidopsis thaliana</name>
    <name type="common">Mouse-ear cress</name>
    <dbReference type="NCBI Taxonomy" id="3702"/>
    <lineage>
        <taxon>Eukaryota</taxon>
        <taxon>Viridiplantae</taxon>
        <taxon>Streptophyta</taxon>
        <taxon>Embryophyta</taxon>
        <taxon>Tracheophyta</taxon>
        <taxon>Spermatophyta</taxon>
        <taxon>Magnoliopsida</taxon>
        <taxon>eudicotyledons</taxon>
        <taxon>Gunneridae</taxon>
        <taxon>Pentapetalae</taxon>
        <taxon>rosids</taxon>
        <taxon>malvids</taxon>
        <taxon>Brassicales</taxon>
        <taxon>Brassicaceae</taxon>
        <taxon>Camelineae</taxon>
        <taxon>Arabidopsis</taxon>
    </lineage>
</organism>
<proteinExistence type="predicted"/>
<protein>
    <recommendedName>
        <fullName>Putative F-box/LRR-repeat protein At3g59170</fullName>
    </recommendedName>
</protein>
<feature type="chain" id="PRO_0000281962" description="Putative F-box/LRR-repeat protein At3g59170">
    <location>
        <begin position="1"/>
        <end position="473"/>
    </location>
</feature>
<feature type="domain" description="F-box" evidence="1">
    <location>
        <begin position="6"/>
        <end position="54"/>
    </location>
</feature>
<feature type="repeat" description="LRR 1">
    <location>
        <begin position="168"/>
        <end position="194"/>
    </location>
</feature>
<feature type="repeat" description="LRR 2">
    <location>
        <begin position="196"/>
        <end position="221"/>
    </location>
</feature>
<feature type="repeat" description="LRR 3">
    <location>
        <begin position="229"/>
        <end position="254"/>
    </location>
</feature>
<feature type="repeat" description="LRR 4">
    <location>
        <begin position="333"/>
        <end position="364"/>
    </location>
</feature>
<feature type="repeat" description="LRR 5">
    <location>
        <begin position="365"/>
        <end position="390"/>
    </location>
</feature>